<feature type="chain" id="PRO_0000199747" description="Homoserine O-acetyltransferase">
    <location>
        <begin position="1"/>
        <end position="306"/>
    </location>
</feature>
<feature type="active site" description="Acyl-thioester intermediate" evidence="1">
    <location>
        <position position="142"/>
    </location>
</feature>
<feature type="active site" description="Proton acceptor" evidence="1">
    <location>
        <position position="237"/>
    </location>
</feature>
<feature type="active site" evidence="1">
    <location>
        <position position="239"/>
    </location>
</feature>
<feature type="binding site" evidence="1">
    <location>
        <position position="163"/>
    </location>
    <ligand>
        <name>substrate</name>
    </ligand>
</feature>
<feature type="binding site" evidence="1">
    <location>
        <position position="194"/>
    </location>
    <ligand>
        <name>substrate</name>
    </ligand>
</feature>
<feature type="binding site" evidence="1">
    <location>
        <position position="251"/>
    </location>
    <ligand>
        <name>substrate</name>
    </ligand>
</feature>
<feature type="site" description="Important for acyl-CoA specificity" evidence="1">
    <location>
        <position position="111"/>
    </location>
</feature>
<feature type="site" description="Important for substrate specificity" evidence="1">
    <location>
        <position position="194"/>
    </location>
</feature>
<dbReference type="EC" id="2.3.1.31" evidence="1"/>
<dbReference type="EMBL" id="AE015927">
    <property type="protein sequence ID" value="AAO35726.1"/>
    <property type="molecule type" value="Genomic_DNA"/>
</dbReference>
<dbReference type="RefSeq" id="WP_011099388.1">
    <property type="nucleotide sequence ID" value="NC_004557.1"/>
</dbReference>
<dbReference type="SMR" id="Q895W4"/>
<dbReference type="STRING" id="212717.CTC_01152"/>
<dbReference type="GeneID" id="24253319"/>
<dbReference type="KEGG" id="ctc:CTC_01152"/>
<dbReference type="HOGENOM" id="CLU_057851_0_1_9"/>
<dbReference type="OrthoDB" id="9772423at2"/>
<dbReference type="UniPathway" id="UPA00051">
    <property type="reaction ID" value="UER00074"/>
</dbReference>
<dbReference type="Proteomes" id="UP000001412">
    <property type="component" value="Chromosome"/>
</dbReference>
<dbReference type="GO" id="GO:0005737">
    <property type="term" value="C:cytoplasm"/>
    <property type="evidence" value="ECO:0007669"/>
    <property type="project" value="UniProtKB-SubCell"/>
</dbReference>
<dbReference type="GO" id="GO:0004414">
    <property type="term" value="F:homoserine O-acetyltransferase activity"/>
    <property type="evidence" value="ECO:0007669"/>
    <property type="project" value="UniProtKB-EC"/>
</dbReference>
<dbReference type="GO" id="GO:0008899">
    <property type="term" value="F:homoserine O-succinyltransferase activity"/>
    <property type="evidence" value="ECO:0007669"/>
    <property type="project" value="UniProtKB-UniRule"/>
</dbReference>
<dbReference type="GO" id="GO:0019281">
    <property type="term" value="P:L-methionine biosynthetic process from homoserine via O-succinyl-L-homoserine and cystathionine"/>
    <property type="evidence" value="ECO:0007669"/>
    <property type="project" value="InterPro"/>
</dbReference>
<dbReference type="CDD" id="cd03131">
    <property type="entry name" value="GATase1_HTS"/>
    <property type="match status" value="1"/>
</dbReference>
<dbReference type="FunFam" id="3.40.50.880:FF:000004">
    <property type="entry name" value="Homoserine O-succinyltransferase"/>
    <property type="match status" value="1"/>
</dbReference>
<dbReference type="Gene3D" id="3.40.50.880">
    <property type="match status" value="1"/>
</dbReference>
<dbReference type="HAMAP" id="MF_00295">
    <property type="entry name" value="MetA_acyltransf"/>
    <property type="match status" value="1"/>
</dbReference>
<dbReference type="InterPro" id="IPR029062">
    <property type="entry name" value="Class_I_gatase-like"/>
</dbReference>
<dbReference type="InterPro" id="IPR005697">
    <property type="entry name" value="HST_MetA"/>
</dbReference>
<dbReference type="InterPro" id="IPR033752">
    <property type="entry name" value="MetA_family"/>
</dbReference>
<dbReference type="NCBIfam" id="TIGR01001">
    <property type="entry name" value="metA"/>
    <property type="match status" value="1"/>
</dbReference>
<dbReference type="PANTHER" id="PTHR20919">
    <property type="entry name" value="HOMOSERINE O-SUCCINYLTRANSFERASE"/>
    <property type="match status" value="1"/>
</dbReference>
<dbReference type="PANTHER" id="PTHR20919:SF0">
    <property type="entry name" value="HOMOSERINE O-SUCCINYLTRANSFERASE"/>
    <property type="match status" value="1"/>
</dbReference>
<dbReference type="Pfam" id="PF04204">
    <property type="entry name" value="HTS"/>
    <property type="match status" value="1"/>
</dbReference>
<dbReference type="PIRSF" id="PIRSF000450">
    <property type="entry name" value="H_ser_succinyltr"/>
    <property type="match status" value="1"/>
</dbReference>
<dbReference type="SUPFAM" id="SSF52317">
    <property type="entry name" value="Class I glutamine amidotransferase-like"/>
    <property type="match status" value="1"/>
</dbReference>
<accession>Q895W4</accession>
<comment type="function">
    <text evidence="1">Transfers an acetyl group from acetyl-CoA to L-homoserine, forming acetyl-L-homoserine.</text>
</comment>
<comment type="catalytic activity">
    <reaction evidence="1">
        <text>L-homoserine + acetyl-CoA = O-acetyl-L-homoserine + CoA</text>
        <dbReference type="Rhea" id="RHEA:13701"/>
        <dbReference type="ChEBI" id="CHEBI:57287"/>
        <dbReference type="ChEBI" id="CHEBI:57288"/>
        <dbReference type="ChEBI" id="CHEBI:57476"/>
        <dbReference type="ChEBI" id="CHEBI:57716"/>
        <dbReference type="EC" id="2.3.1.31"/>
    </reaction>
</comment>
<comment type="pathway">
    <text evidence="1">Amino-acid biosynthesis; L-methionine biosynthesis via de novo pathway; O-acetyl-L-homoserine from L-homoserine: step 1/1.</text>
</comment>
<comment type="subcellular location">
    <subcellularLocation>
        <location evidence="1">Cytoplasm</location>
    </subcellularLocation>
</comment>
<comment type="similarity">
    <text evidence="1">Belongs to the MetA family.</text>
</comment>
<evidence type="ECO:0000255" key="1">
    <source>
        <dbReference type="HAMAP-Rule" id="MF_00295"/>
    </source>
</evidence>
<reference key="1">
    <citation type="journal article" date="2003" name="Proc. Natl. Acad. Sci. U.S.A.">
        <title>The genome sequence of Clostridium tetani, the causative agent of tetanus disease.</title>
        <authorList>
            <person name="Brueggemann H."/>
            <person name="Baeumer S."/>
            <person name="Fricke W.F."/>
            <person name="Wiezer A."/>
            <person name="Liesegang H."/>
            <person name="Decker I."/>
            <person name="Herzberg C."/>
            <person name="Martinez-Arias R."/>
            <person name="Merkl R."/>
            <person name="Henne A."/>
            <person name="Gottschalk G."/>
        </authorList>
    </citation>
    <scope>NUCLEOTIDE SEQUENCE [LARGE SCALE GENOMIC DNA]</scope>
    <source>
        <strain>Massachusetts / E88</strain>
    </source>
</reference>
<name>METAA_CLOTE</name>
<organism>
    <name type="scientific">Clostridium tetani (strain Massachusetts / E88)</name>
    <dbReference type="NCBI Taxonomy" id="212717"/>
    <lineage>
        <taxon>Bacteria</taxon>
        <taxon>Bacillati</taxon>
        <taxon>Bacillota</taxon>
        <taxon>Clostridia</taxon>
        <taxon>Eubacteriales</taxon>
        <taxon>Clostridiaceae</taxon>
        <taxon>Clostridium</taxon>
    </lineage>
</organism>
<gene>
    <name evidence="1" type="primary">metAA</name>
    <name type="ordered locus">CTC_01152</name>
</gene>
<keyword id="KW-0012">Acyltransferase</keyword>
<keyword id="KW-0028">Amino-acid biosynthesis</keyword>
<keyword id="KW-0963">Cytoplasm</keyword>
<keyword id="KW-0486">Methionine biosynthesis</keyword>
<keyword id="KW-1185">Reference proteome</keyword>
<keyword id="KW-0808">Transferase</keyword>
<proteinExistence type="inferred from homology"/>
<sequence>MPIVIPKDLPATETLENENIFVITEHRAIHQDIRPLKIAIVNLMPKKIETETQLLRLLGNIPIQVSIDLIHPKTHHSKNISEKHLLSFYKTIDDIKNEKFDGMIITGAPVEQIAFEDVDYFQELKTIMDFSVTNVFSTLHICWGAQAALYYHYNINKNILPKKVFGVFSHHININKGTVKLLRGFDDKFYVPHSRHTEVKKEDIEKVPELEIFAESNEVGPYIIASKNGRQIFITGHPEYDANTLKSEYYRDINLGKHIEIPKNYFKNNNPREELIANWRGHANLLFSNWLNYYVYQETPYSYISI</sequence>
<protein>
    <recommendedName>
        <fullName evidence="1">Homoserine O-acetyltransferase</fullName>
        <shortName evidence="1">HAT</shortName>
        <ecNumber evidence="1">2.3.1.31</ecNumber>
    </recommendedName>
    <alternativeName>
        <fullName evidence="1">Homoserine transacetylase</fullName>
        <shortName evidence="1">HTA</shortName>
    </alternativeName>
</protein>